<comment type="function">
    <text evidence="3 4 5">Can act as both a transcriptional repressor and corepressor. Represses the expression of genes involved in neural development and preferentially binds palindromic sequence 5'-CCAATTGG-3' to mediate transcriptional repression (PubMed:23468431, PubMed:25561495). Acts as a corepressor for suppressor of hairless (Su(H)) and inhibits Notch signaling during peripheral nervous system development (PubMed:21765394, PubMed:25561495).</text>
</comment>
<comment type="subunit">
    <text evidence="3 5 6">Homodimer. Interacts (via BEN domain) with Su(H). Interacts with Cp190.</text>
</comment>
<comment type="interaction">
    <interactant intactId="EBI-192407">
        <id>Q8SYK5</id>
    </interactant>
    <interactant intactId="EBI-156442">
        <id>Q24117</id>
        <label>ctp</label>
    </interactant>
    <organismsDiffer>false</organismsDiffer>
    <experiments>4</experiments>
</comment>
<comment type="interaction">
    <interactant intactId="EBI-192407">
        <id>Q8SYK5</id>
    </interactant>
    <interactant intactId="EBI-92180">
        <id>P28159</id>
        <label>Su(H)</label>
    </interactant>
    <organismsDiffer>false</organismsDiffer>
    <experiments>4</experiments>
</comment>
<comment type="subcellular location">
    <subcellularLocation>
        <location evidence="3 4 5">Nucleus</location>
    </subcellularLocation>
</comment>
<comment type="developmental stage">
    <text evidence="3 5">Initially expressed ubiquitously in the early embryo and later throughout the developing ectoderm but becomes highly restricted to the developing CNS and PNS. Peak expression seen at the blastoderm stage (2-4 hours) (at protein level).</text>
</comment>
<comment type="domain">
    <text evidence="4 5">The BEN domain mediates DNA-binding.</text>
</comment>
<sequence>MENQYQRIVSATAREDSQARRSKPLFLNAWSQTSSVDFEVLRSISAPDPQVEVENRALRDKVRYLEAKLQQHKDLLSQIHATSARMQQASSLLAESRPPTPPAVQSHHILTPPSSEICAPAQNPQILDYKIISAPDDADAIEIRLAAESLNSLSTSADSDRLEICLGDENHQQSNHHNSQQQYRISNGIKRDGSSESADTPLQFIKRRKLQEIQLQEEIPRQNIKLPAKPQVKARNGSFTDLNKGQQQNMDNVMVSIGPNNTCVPASVFENINWSVCSLATRKLLVTIFDRETLATHSMTGKPSPAFKDQDKPLKRMLDPGKIQDIIFAVTHKCNASEKEVRNAITTKCADENKMMKIQNVKRRSSGIKHEKENII</sequence>
<name>INSV_DROME</name>
<evidence type="ECO:0000255" key="1"/>
<evidence type="ECO:0000255" key="2">
    <source>
        <dbReference type="PROSITE-ProRule" id="PRU00784"/>
    </source>
</evidence>
<evidence type="ECO:0000269" key="3">
    <source>
    </source>
</evidence>
<evidence type="ECO:0000269" key="4">
    <source>
    </source>
</evidence>
<evidence type="ECO:0000269" key="5">
    <source>
    </source>
</evidence>
<evidence type="ECO:0000303" key="6">
    <source>
    </source>
</evidence>
<evidence type="ECO:0007829" key="7">
    <source>
        <dbReference type="PDB" id="4IX7"/>
    </source>
</evidence>
<gene>
    <name type="primary">insv</name>
    <name type="ORF">CG3227</name>
</gene>
<organism>
    <name type="scientific">Drosophila melanogaster</name>
    <name type="common">Fruit fly</name>
    <dbReference type="NCBI Taxonomy" id="7227"/>
    <lineage>
        <taxon>Eukaryota</taxon>
        <taxon>Metazoa</taxon>
        <taxon>Ecdysozoa</taxon>
        <taxon>Arthropoda</taxon>
        <taxon>Hexapoda</taxon>
        <taxon>Insecta</taxon>
        <taxon>Pterygota</taxon>
        <taxon>Neoptera</taxon>
        <taxon>Endopterygota</taxon>
        <taxon>Diptera</taxon>
        <taxon>Brachycera</taxon>
        <taxon>Muscomorpha</taxon>
        <taxon>Ephydroidea</taxon>
        <taxon>Drosophilidae</taxon>
        <taxon>Drosophila</taxon>
        <taxon>Sophophora</taxon>
    </lineage>
</organism>
<keyword id="KW-0002">3D-structure</keyword>
<keyword id="KW-0175">Coiled coil</keyword>
<keyword id="KW-0238">DNA-binding</keyword>
<keyword id="KW-0539">Nucleus</keyword>
<keyword id="KW-1185">Reference proteome</keyword>
<keyword id="KW-0678">Repressor</keyword>
<keyword id="KW-0804">Transcription</keyword>
<keyword id="KW-0805">Transcription regulation</keyword>
<dbReference type="EMBL" id="AE014134">
    <property type="protein sequence ID" value="AAF51240.1"/>
    <property type="molecule type" value="Genomic_DNA"/>
</dbReference>
<dbReference type="EMBL" id="AE014134">
    <property type="protein sequence ID" value="AHN54081.1"/>
    <property type="molecule type" value="Genomic_DNA"/>
</dbReference>
<dbReference type="EMBL" id="AY071488">
    <property type="protein sequence ID" value="AAL49110.1"/>
    <property type="molecule type" value="mRNA"/>
</dbReference>
<dbReference type="EMBL" id="BT056232">
    <property type="protein sequence ID" value="ACL68679.1"/>
    <property type="molecule type" value="mRNA"/>
</dbReference>
<dbReference type="RefSeq" id="NP_001285566.1">
    <property type="nucleotide sequence ID" value="NM_001298637.1"/>
</dbReference>
<dbReference type="RefSeq" id="NP_608690.2">
    <property type="nucleotide sequence ID" value="NM_134846.3"/>
</dbReference>
<dbReference type="PDB" id="4IX7">
    <property type="method" value="X-ray"/>
    <property type="resolution" value="1.58 A"/>
    <property type="chains" value="A/B=251-365"/>
</dbReference>
<dbReference type="PDBsum" id="4IX7"/>
<dbReference type="SMR" id="Q8SYK5"/>
<dbReference type="FunCoup" id="Q8SYK5">
    <property type="interactions" value="183"/>
</dbReference>
<dbReference type="IntAct" id="Q8SYK5">
    <property type="interactions" value="4"/>
</dbReference>
<dbReference type="MINT" id="Q8SYK5"/>
<dbReference type="STRING" id="7227.FBpp0077426"/>
<dbReference type="GlyGen" id="Q8SYK5">
    <property type="glycosylation" value="1 site"/>
</dbReference>
<dbReference type="PaxDb" id="7227-FBpp0077426"/>
<dbReference type="DNASU" id="33441"/>
<dbReference type="EnsemblMetazoa" id="FBtr0077746">
    <property type="protein sequence ID" value="FBpp0077426"/>
    <property type="gene ID" value="FBgn0031434"/>
</dbReference>
<dbReference type="EnsemblMetazoa" id="FBtr0344854">
    <property type="protein sequence ID" value="FBpp0311169"/>
    <property type="gene ID" value="FBgn0031434"/>
</dbReference>
<dbReference type="GeneID" id="33441"/>
<dbReference type="KEGG" id="dme:Dmel_CG3227"/>
<dbReference type="UCSC" id="CG3227-RA">
    <property type="organism name" value="d. melanogaster"/>
</dbReference>
<dbReference type="AGR" id="FB:FBgn0031434"/>
<dbReference type="CTD" id="33441"/>
<dbReference type="FlyBase" id="FBgn0031434">
    <property type="gene designation" value="insv"/>
</dbReference>
<dbReference type="VEuPathDB" id="VectorBase:FBgn0031434"/>
<dbReference type="eggNOG" id="ENOG502S4GE">
    <property type="taxonomic scope" value="Eukaryota"/>
</dbReference>
<dbReference type="GeneTree" id="ENSGT00530000069528"/>
<dbReference type="HOGENOM" id="CLU_736238_0_0_1"/>
<dbReference type="InParanoid" id="Q8SYK5"/>
<dbReference type="OMA" id="PKPLKQM"/>
<dbReference type="OrthoDB" id="8186171at2759"/>
<dbReference type="PhylomeDB" id="Q8SYK5"/>
<dbReference type="SignaLink" id="Q8SYK5"/>
<dbReference type="BioGRID-ORCS" id="33441">
    <property type="hits" value="0 hits in 1 CRISPR screen"/>
</dbReference>
<dbReference type="EvolutionaryTrace" id="Q8SYK5"/>
<dbReference type="GenomeRNAi" id="33441"/>
<dbReference type="PRO" id="PR:Q8SYK5"/>
<dbReference type="Proteomes" id="UP000000803">
    <property type="component" value="Chromosome 2L"/>
</dbReference>
<dbReference type="Bgee" id="FBgn0031434">
    <property type="expression patterns" value="Expressed in egg chamber and 39 other cell types or tissues"/>
</dbReference>
<dbReference type="GO" id="GO:0005634">
    <property type="term" value="C:nucleus"/>
    <property type="evidence" value="ECO:0000314"/>
    <property type="project" value="UniProtKB"/>
</dbReference>
<dbReference type="GO" id="GO:0043035">
    <property type="term" value="F:chromatin insulator sequence binding"/>
    <property type="evidence" value="ECO:0000314"/>
    <property type="project" value="UniProtKB"/>
</dbReference>
<dbReference type="GO" id="GO:0043565">
    <property type="term" value="F:sequence-specific DNA binding"/>
    <property type="evidence" value="ECO:0000314"/>
    <property type="project" value="UniProtKB"/>
</dbReference>
<dbReference type="GO" id="GO:0003714">
    <property type="term" value="F:transcription corepressor activity"/>
    <property type="evidence" value="ECO:0000353"/>
    <property type="project" value="FlyBase"/>
</dbReference>
<dbReference type="GO" id="GO:0045892">
    <property type="term" value="P:negative regulation of DNA-templated transcription"/>
    <property type="evidence" value="ECO:0000314"/>
    <property type="project" value="UniProtKB"/>
</dbReference>
<dbReference type="GO" id="GO:0045746">
    <property type="term" value="P:negative regulation of Notch signaling pathway"/>
    <property type="evidence" value="ECO:0000315"/>
    <property type="project" value="UniProtKB"/>
</dbReference>
<dbReference type="GO" id="GO:0045666">
    <property type="term" value="P:positive regulation of neuron differentiation"/>
    <property type="evidence" value="ECO:0000318"/>
    <property type="project" value="GO_Central"/>
</dbReference>
<dbReference type="FunFam" id="1.10.10.2590:FF:000005">
    <property type="entry name" value="Early boundary activity protein 1"/>
    <property type="match status" value="1"/>
</dbReference>
<dbReference type="Gene3D" id="1.10.10.2590">
    <property type="entry name" value="BEN domain"/>
    <property type="match status" value="1"/>
</dbReference>
<dbReference type="InterPro" id="IPR018379">
    <property type="entry name" value="BEN_domain"/>
</dbReference>
<dbReference type="InterPro" id="IPR037496">
    <property type="entry name" value="BEND6-like"/>
</dbReference>
<dbReference type="PANTHER" id="PTHR35346">
    <property type="entry name" value="BEN DOMAIN-CONTAINING PROTEIN 6"/>
    <property type="match status" value="1"/>
</dbReference>
<dbReference type="PANTHER" id="PTHR35346:SF1">
    <property type="entry name" value="BEN DOMAIN-CONTAINING PROTEIN 6"/>
    <property type="match status" value="1"/>
</dbReference>
<dbReference type="Pfam" id="PF10523">
    <property type="entry name" value="BEN"/>
    <property type="match status" value="1"/>
</dbReference>
<dbReference type="SMART" id="SM01025">
    <property type="entry name" value="BEN"/>
    <property type="match status" value="1"/>
</dbReference>
<dbReference type="PROSITE" id="PS51457">
    <property type="entry name" value="BEN"/>
    <property type="match status" value="1"/>
</dbReference>
<accession>Q8SYK5</accession>
<accession>Q9VQD5</accession>
<proteinExistence type="evidence at protein level"/>
<protein>
    <recommendedName>
        <fullName>Protein insensitive</fullName>
    </recommendedName>
</protein>
<reference key="1">
    <citation type="journal article" date="2000" name="Science">
        <title>The genome sequence of Drosophila melanogaster.</title>
        <authorList>
            <person name="Adams M.D."/>
            <person name="Celniker S.E."/>
            <person name="Holt R.A."/>
            <person name="Evans C.A."/>
            <person name="Gocayne J.D."/>
            <person name="Amanatides P.G."/>
            <person name="Scherer S.E."/>
            <person name="Li P.W."/>
            <person name="Hoskins R.A."/>
            <person name="Galle R.F."/>
            <person name="George R.A."/>
            <person name="Lewis S.E."/>
            <person name="Richards S."/>
            <person name="Ashburner M."/>
            <person name="Henderson S.N."/>
            <person name="Sutton G.G."/>
            <person name="Wortman J.R."/>
            <person name="Yandell M.D."/>
            <person name="Zhang Q."/>
            <person name="Chen L.X."/>
            <person name="Brandon R.C."/>
            <person name="Rogers Y.-H.C."/>
            <person name="Blazej R.G."/>
            <person name="Champe M."/>
            <person name="Pfeiffer B.D."/>
            <person name="Wan K.H."/>
            <person name="Doyle C."/>
            <person name="Baxter E.G."/>
            <person name="Helt G."/>
            <person name="Nelson C.R."/>
            <person name="Miklos G.L.G."/>
            <person name="Abril J.F."/>
            <person name="Agbayani A."/>
            <person name="An H.-J."/>
            <person name="Andrews-Pfannkoch C."/>
            <person name="Baldwin D."/>
            <person name="Ballew R.M."/>
            <person name="Basu A."/>
            <person name="Baxendale J."/>
            <person name="Bayraktaroglu L."/>
            <person name="Beasley E.M."/>
            <person name="Beeson K.Y."/>
            <person name="Benos P.V."/>
            <person name="Berman B.P."/>
            <person name="Bhandari D."/>
            <person name="Bolshakov S."/>
            <person name="Borkova D."/>
            <person name="Botchan M.R."/>
            <person name="Bouck J."/>
            <person name="Brokstein P."/>
            <person name="Brottier P."/>
            <person name="Burtis K.C."/>
            <person name="Busam D.A."/>
            <person name="Butler H."/>
            <person name="Cadieu E."/>
            <person name="Center A."/>
            <person name="Chandra I."/>
            <person name="Cherry J.M."/>
            <person name="Cawley S."/>
            <person name="Dahlke C."/>
            <person name="Davenport L.B."/>
            <person name="Davies P."/>
            <person name="de Pablos B."/>
            <person name="Delcher A."/>
            <person name="Deng Z."/>
            <person name="Mays A.D."/>
            <person name="Dew I."/>
            <person name="Dietz S.M."/>
            <person name="Dodson K."/>
            <person name="Doup L.E."/>
            <person name="Downes M."/>
            <person name="Dugan-Rocha S."/>
            <person name="Dunkov B.C."/>
            <person name="Dunn P."/>
            <person name="Durbin K.J."/>
            <person name="Evangelista C.C."/>
            <person name="Ferraz C."/>
            <person name="Ferriera S."/>
            <person name="Fleischmann W."/>
            <person name="Fosler C."/>
            <person name="Gabrielian A.E."/>
            <person name="Garg N.S."/>
            <person name="Gelbart W.M."/>
            <person name="Glasser K."/>
            <person name="Glodek A."/>
            <person name="Gong F."/>
            <person name="Gorrell J.H."/>
            <person name="Gu Z."/>
            <person name="Guan P."/>
            <person name="Harris M."/>
            <person name="Harris N.L."/>
            <person name="Harvey D.A."/>
            <person name="Heiman T.J."/>
            <person name="Hernandez J.R."/>
            <person name="Houck J."/>
            <person name="Hostin D."/>
            <person name="Houston K.A."/>
            <person name="Howland T.J."/>
            <person name="Wei M.-H."/>
            <person name="Ibegwam C."/>
            <person name="Jalali M."/>
            <person name="Kalush F."/>
            <person name="Karpen G.H."/>
            <person name="Ke Z."/>
            <person name="Kennison J.A."/>
            <person name="Ketchum K.A."/>
            <person name="Kimmel B.E."/>
            <person name="Kodira C.D."/>
            <person name="Kraft C.L."/>
            <person name="Kravitz S."/>
            <person name="Kulp D."/>
            <person name="Lai Z."/>
            <person name="Lasko P."/>
            <person name="Lei Y."/>
            <person name="Levitsky A.A."/>
            <person name="Li J.H."/>
            <person name="Li Z."/>
            <person name="Liang Y."/>
            <person name="Lin X."/>
            <person name="Liu X."/>
            <person name="Mattei B."/>
            <person name="McIntosh T.C."/>
            <person name="McLeod M.P."/>
            <person name="McPherson D."/>
            <person name="Merkulov G."/>
            <person name="Milshina N.V."/>
            <person name="Mobarry C."/>
            <person name="Morris J."/>
            <person name="Moshrefi A."/>
            <person name="Mount S.M."/>
            <person name="Moy M."/>
            <person name="Murphy B."/>
            <person name="Murphy L."/>
            <person name="Muzny D.M."/>
            <person name="Nelson D.L."/>
            <person name="Nelson D.R."/>
            <person name="Nelson K.A."/>
            <person name="Nixon K."/>
            <person name="Nusskern D.R."/>
            <person name="Pacleb J.M."/>
            <person name="Palazzolo M."/>
            <person name="Pittman G.S."/>
            <person name="Pan S."/>
            <person name="Pollard J."/>
            <person name="Puri V."/>
            <person name="Reese M.G."/>
            <person name="Reinert K."/>
            <person name="Remington K."/>
            <person name="Saunders R.D.C."/>
            <person name="Scheeler F."/>
            <person name="Shen H."/>
            <person name="Shue B.C."/>
            <person name="Siden-Kiamos I."/>
            <person name="Simpson M."/>
            <person name="Skupski M.P."/>
            <person name="Smith T.J."/>
            <person name="Spier E."/>
            <person name="Spradling A.C."/>
            <person name="Stapleton M."/>
            <person name="Strong R."/>
            <person name="Sun E."/>
            <person name="Svirskas R."/>
            <person name="Tector C."/>
            <person name="Turner R."/>
            <person name="Venter E."/>
            <person name="Wang A.H."/>
            <person name="Wang X."/>
            <person name="Wang Z.-Y."/>
            <person name="Wassarman D.A."/>
            <person name="Weinstock G.M."/>
            <person name="Weissenbach J."/>
            <person name="Williams S.M."/>
            <person name="Woodage T."/>
            <person name="Worley K.C."/>
            <person name="Wu D."/>
            <person name="Yang S."/>
            <person name="Yao Q.A."/>
            <person name="Ye J."/>
            <person name="Yeh R.-F."/>
            <person name="Zaveri J.S."/>
            <person name="Zhan M."/>
            <person name="Zhang G."/>
            <person name="Zhao Q."/>
            <person name="Zheng L."/>
            <person name="Zheng X.H."/>
            <person name="Zhong F.N."/>
            <person name="Zhong W."/>
            <person name="Zhou X."/>
            <person name="Zhu S.C."/>
            <person name="Zhu X."/>
            <person name="Smith H.O."/>
            <person name="Gibbs R.A."/>
            <person name="Myers E.W."/>
            <person name="Rubin G.M."/>
            <person name="Venter J.C."/>
        </authorList>
    </citation>
    <scope>NUCLEOTIDE SEQUENCE [LARGE SCALE GENOMIC DNA]</scope>
    <source>
        <strain>Berkeley</strain>
    </source>
</reference>
<reference key="2">
    <citation type="journal article" date="2002" name="Genome Biol.">
        <title>Annotation of the Drosophila melanogaster euchromatic genome: a systematic review.</title>
        <authorList>
            <person name="Misra S."/>
            <person name="Crosby M.A."/>
            <person name="Mungall C.J."/>
            <person name="Matthews B.B."/>
            <person name="Campbell K.S."/>
            <person name="Hradecky P."/>
            <person name="Huang Y."/>
            <person name="Kaminker J.S."/>
            <person name="Millburn G.H."/>
            <person name="Prochnik S.E."/>
            <person name="Smith C.D."/>
            <person name="Tupy J.L."/>
            <person name="Whitfield E.J."/>
            <person name="Bayraktaroglu L."/>
            <person name="Berman B.P."/>
            <person name="Bettencourt B.R."/>
            <person name="Celniker S.E."/>
            <person name="de Grey A.D.N.J."/>
            <person name="Drysdale R.A."/>
            <person name="Harris N.L."/>
            <person name="Richter J."/>
            <person name="Russo S."/>
            <person name="Schroeder A.J."/>
            <person name="Shu S.Q."/>
            <person name="Stapleton M."/>
            <person name="Yamada C."/>
            <person name="Ashburner M."/>
            <person name="Gelbart W.M."/>
            <person name="Rubin G.M."/>
            <person name="Lewis S.E."/>
        </authorList>
    </citation>
    <scope>GENOME REANNOTATION</scope>
    <source>
        <strain>Berkeley</strain>
    </source>
</reference>
<reference key="3">
    <citation type="journal article" date="2002" name="Genome Biol.">
        <title>A Drosophila full-length cDNA resource.</title>
        <authorList>
            <person name="Stapleton M."/>
            <person name="Carlson J.W."/>
            <person name="Brokstein P."/>
            <person name="Yu C."/>
            <person name="Champe M."/>
            <person name="George R.A."/>
            <person name="Guarin H."/>
            <person name="Kronmiller B."/>
            <person name="Pacleb J.M."/>
            <person name="Park S."/>
            <person name="Wan K.H."/>
            <person name="Rubin G.M."/>
            <person name="Celniker S.E."/>
        </authorList>
    </citation>
    <scope>NUCLEOTIDE SEQUENCE [LARGE SCALE MRNA]</scope>
    <source>
        <strain>Berkeley</strain>
        <tissue>Embryo</tissue>
    </source>
</reference>
<reference key="4">
    <citation type="submission" date="2009-01" db="EMBL/GenBank/DDBJ databases">
        <authorList>
            <person name="Carlson J."/>
            <person name="Booth B."/>
            <person name="Frise E."/>
            <person name="Park S."/>
            <person name="Wan K."/>
            <person name="Yu C."/>
            <person name="Celniker S."/>
        </authorList>
    </citation>
    <scope>NUCLEOTIDE SEQUENCE [LARGE SCALE MRNA]</scope>
    <source>
        <strain>Berkeley</strain>
    </source>
</reference>
<reference key="5">
    <citation type="journal article" date="2011" name="EMBO J.">
        <title>Insensitive is a corepressor for Suppressor of Hairless and regulates Notch signalling during neural development.</title>
        <authorList>
            <person name="Duan H."/>
            <person name="Dai Q."/>
            <person name="Kavaler J."/>
            <person name="Bejarano F."/>
            <person name="Medranda G."/>
            <person name="Negre N."/>
            <person name="Lai E.C."/>
        </authorList>
    </citation>
    <scope>FUNCTION</scope>
    <scope>SUBCELLULAR LOCATION</scope>
    <scope>DEVELOPMENTAL STAGE</scope>
    <scope>INTERACTION WITH SU(H)</scope>
</reference>
<reference key="6">
    <citation type="journal article" date="2015" name="Genes Dev.">
        <title>Common and distinct DNA-binding and regulatory activities of the BEN-solo transcription factor family.</title>
        <authorList>
            <person name="Dai Q."/>
            <person name="Ren A."/>
            <person name="Westholm J.O."/>
            <person name="Duan H."/>
            <person name="Patel D.J."/>
            <person name="Lai E.C."/>
        </authorList>
    </citation>
    <scope>FUNCTION</scope>
    <scope>SUBCELLULAR LOCATION</scope>
    <scope>DEVELOPMENTAL STAGE</scope>
    <scope>INTERACTION WITH CP190</scope>
    <scope>DNA-BINDING</scope>
    <scope>DOMAIN BEN</scope>
</reference>
<reference key="7">
    <citation type="journal article" date="2013" name="Genes Dev.">
        <title>The BEN domain is a novel sequence-specific DNA-binding domain conserved in neural transcriptional repressors.</title>
        <authorList>
            <person name="Dai Q."/>
            <person name="Ren A."/>
            <person name="Westholm J.O."/>
            <person name="Serganov A.A."/>
            <person name="Patel D.J."/>
            <person name="Lai E.C."/>
        </authorList>
    </citation>
    <scope>X-RAY CRYSTALLOGRAPHY (1.58 ANGSTROMS) OF 251-365</scope>
    <scope>FUNCTION</scope>
    <scope>SUBUNIT</scope>
    <scope>SUBCELLULAR LOCATION</scope>
    <scope>DOMAIN BEN</scope>
    <scope>DNA-BINDING</scope>
    <scope>MUTAGENESIS OF SER-304; LYS-315; ARG-342; ASP-351 AND LYS-354</scope>
</reference>
<feature type="chain" id="PRO_0000434573" description="Protein insensitive">
    <location>
        <begin position="1"/>
        <end position="376"/>
    </location>
</feature>
<feature type="domain" description="BEN" evidence="2">
    <location>
        <begin position="258"/>
        <end position="356"/>
    </location>
</feature>
<feature type="coiled-coil region" evidence="1">
    <location>
        <begin position="50"/>
        <end position="79"/>
    </location>
</feature>
<feature type="mutagenesis site" description="Partial loss of DNA-binding and transcriptional repressor activity." evidence="4">
    <original>S</original>
    <variation>A</variation>
    <location>
        <position position="304"/>
    </location>
</feature>
<feature type="mutagenesis site" description="Complete loss of DNA-binding." evidence="4">
    <original>K</original>
    <variation>A</variation>
    <location>
        <position position="315"/>
    </location>
</feature>
<feature type="mutagenesis site" description="Complete loss of DNA-binding." evidence="4">
    <original>R</original>
    <variation>A</variation>
    <location>
        <position position="342"/>
    </location>
</feature>
<feature type="mutagenesis site" description="Partial loss of DNA-binding and significant decrease in transcriptional repressor activity. Complete loss of repressor activity; when associated with A-354." evidence="4">
    <original>D</original>
    <variation>A</variation>
    <location>
        <position position="351"/>
    </location>
</feature>
<feature type="mutagenesis site" description="Significant loss of DNA-binding and transcriptional repressor activity. Complete loss of repressor activity; when associated with A-351." evidence="4">
    <original>K</original>
    <variation>A</variation>
    <location>
        <position position="354"/>
    </location>
</feature>
<feature type="sequence conflict" description="In Ref. 3; AAL49110." ref="3">
    <original>M</original>
    <variation>V</variation>
    <location>
        <position position="299"/>
    </location>
</feature>
<feature type="strand" evidence="7">
    <location>
        <begin position="254"/>
        <end position="256"/>
    </location>
</feature>
<feature type="strand" evidence="7">
    <location>
        <begin position="263"/>
        <end position="265"/>
    </location>
</feature>
<feature type="helix" evidence="7">
    <location>
        <begin position="266"/>
        <end position="269"/>
    </location>
</feature>
<feature type="helix" evidence="7">
    <location>
        <begin position="277"/>
        <end position="288"/>
    </location>
</feature>
<feature type="helix" evidence="7">
    <location>
        <begin position="291"/>
        <end position="296"/>
    </location>
</feature>
<feature type="strand" evidence="7">
    <location>
        <begin position="297"/>
        <end position="300"/>
    </location>
</feature>
<feature type="helix" evidence="7">
    <location>
        <begin position="305"/>
        <end position="307"/>
    </location>
</feature>
<feature type="helix" evidence="7">
    <location>
        <begin position="320"/>
        <end position="334"/>
    </location>
</feature>
<feature type="helix" evidence="7">
    <location>
        <begin position="338"/>
        <end position="362"/>
    </location>
</feature>